<protein>
    <recommendedName>
        <fullName evidence="2">Elongation factor 1-alpha</fullName>
        <shortName evidence="2">EF-1-alpha</shortName>
        <ecNumber evidence="2">3.6.5.3</ecNumber>
    </recommendedName>
    <alternativeName>
        <fullName evidence="2">Elongation factor Tu</fullName>
        <shortName evidence="2">EF-Tu</shortName>
    </alternativeName>
</protein>
<dbReference type="EC" id="3.6.5.3" evidence="2"/>
<dbReference type="EMBL" id="X73582">
    <property type="protein sequence ID" value="CAA51984.1"/>
    <property type="molecule type" value="Genomic_DNA"/>
</dbReference>
<dbReference type="SMR" id="P41203"/>
<dbReference type="GO" id="GO:0005737">
    <property type="term" value="C:cytoplasm"/>
    <property type="evidence" value="ECO:0007669"/>
    <property type="project" value="UniProtKB-SubCell"/>
</dbReference>
<dbReference type="GO" id="GO:0005525">
    <property type="term" value="F:GTP binding"/>
    <property type="evidence" value="ECO:0007669"/>
    <property type="project" value="UniProtKB-UniRule"/>
</dbReference>
<dbReference type="GO" id="GO:0003924">
    <property type="term" value="F:GTPase activity"/>
    <property type="evidence" value="ECO:0007669"/>
    <property type="project" value="InterPro"/>
</dbReference>
<dbReference type="GO" id="GO:0003746">
    <property type="term" value="F:translation elongation factor activity"/>
    <property type="evidence" value="ECO:0007669"/>
    <property type="project" value="UniProtKB-UniRule"/>
</dbReference>
<dbReference type="CDD" id="cd01883">
    <property type="entry name" value="EF1_alpha"/>
    <property type="match status" value="1"/>
</dbReference>
<dbReference type="CDD" id="cd03693">
    <property type="entry name" value="EF1_alpha_II"/>
    <property type="match status" value="1"/>
</dbReference>
<dbReference type="CDD" id="cd03705">
    <property type="entry name" value="EF1_alpha_III"/>
    <property type="match status" value="1"/>
</dbReference>
<dbReference type="FunFam" id="2.40.30.10:FF:000003">
    <property type="entry name" value="Elongation factor 1-alpha"/>
    <property type="match status" value="1"/>
</dbReference>
<dbReference type="FunFam" id="2.40.30.10:FF:000005">
    <property type="entry name" value="Elongation factor 1-alpha"/>
    <property type="match status" value="1"/>
</dbReference>
<dbReference type="FunFam" id="3.40.50.300:FF:000255">
    <property type="entry name" value="Elongation factor 1-alpha"/>
    <property type="match status" value="1"/>
</dbReference>
<dbReference type="Gene3D" id="3.40.50.300">
    <property type="entry name" value="P-loop containing nucleotide triphosphate hydrolases"/>
    <property type="match status" value="1"/>
</dbReference>
<dbReference type="Gene3D" id="2.40.30.10">
    <property type="entry name" value="Translation factors"/>
    <property type="match status" value="2"/>
</dbReference>
<dbReference type="HAMAP" id="MF_00118_A">
    <property type="entry name" value="EF_Tu_A"/>
    <property type="match status" value="1"/>
</dbReference>
<dbReference type="InterPro" id="IPR004161">
    <property type="entry name" value="EFTu-like_2"/>
</dbReference>
<dbReference type="InterPro" id="IPR031157">
    <property type="entry name" value="G_TR_CS"/>
</dbReference>
<dbReference type="InterPro" id="IPR054696">
    <property type="entry name" value="GTP-eEF1A_C"/>
</dbReference>
<dbReference type="InterPro" id="IPR027417">
    <property type="entry name" value="P-loop_NTPase"/>
</dbReference>
<dbReference type="InterPro" id="IPR005225">
    <property type="entry name" value="Small_GTP-bd"/>
</dbReference>
<dbReference type="InterPro" id="IPR000795">
    <property type="entry name" value="T_Tr_GTP-bd_dom"/>
</dbReference>
<dbReference type="InterPro" id="IPR050100">
    <property type="entry name" value="TRAFAC_GTPase_members"/>
</dbReference>
<dbReference type="InterPro" id="IPR009000">
    <property type="entry name" value="Transl_B-barrel_sf"/>
</dbReference>
<dbReference type="InterPro" id="IPR009001">
    <property type="entry name" value="Transl_elong_EF1A/Init_IF2_C"/>
</dbReference>
<dbReference type="InterPro" id="IPR004539">
    <property type="entry name" value="Transl_elong_EF1A_euk/arc"/>
</dbReference>
<dbReference type="NCBIfam" id="TIGR00483">
    <property type="entry name" value="EF-1_alpha"/>
    <property type="match status" value="1"/>
</dbReference>
<dbReference type="NCBIfam" id="NF008969">
    <property type="entry name" value="PRK12317.1"/>
    <property type="match status" value="1"/>
</dbReference>
<dbReference type="NCBIfam" id="TIGR00231">
    <property type="entry name" value="small_GTP"/>
    <property type="match status" value="1"/>
</dbReference>
<dbReference type="PANTHER" id="PTHR23115">
    <property type="entry name" value="TRANSLATION FACTOR"/>
    <property type="match status" value="1"/>
</dbReference>
<dbReference type="Pfam" id="PF22594">
    <property type="entry name" value="GTP-eEF1A_C"/>
    <property type="match status" value="1"/>
</dbReference>
<dbReference type="Pfam" id="PF00009">
    <property type="entry name" value="GTP_EFTU"/>
    <property type="match status" value="1"/>
</dbReference>
<dbReference type="Pfam" id="PF03144">
    <property type="entry name" value="GTP_EFTU_D2"/>
    <property type="match status" value="1"/>
</dbReference>
<dbReference type="PRINTS" id="PR00315">
    <property type="entry name" value="ELONGATNFCT"/>
</dbReference>
<dbReference type="SUPFAM" id="SSF50465">
    <property type="entry name" value="EF-Tu/eEF-1alpha/eIF2-gamma C-terminal domain"/>
    <property type="match status" value="1"/>
</dbReference>
<dbReference type="SUPFAM" id="SSF52540">
    <property type="entry name" value="P-loop containing nucleoside triphosphate hydrolases"/>
    <property type="match status" value="1"/>
</dbReference>
<dbReference type="SUPFAM" id="SSF50447">
    <property type="entry name" value="Translation proteins"/>
    <property type="match status" value="1"/>
</dbReference>
<dbReference type="PROSITE" id="PS00301">
    <property type="entry name" value="G_TR_1"/>
    <property type="match status" value="1"/>
</dbReference>
<dbReference type="PROSITE" id="PS51722">
    <property type="entry name" value="G_TR_2"/>
    <property type="match status" value="1"/>
</dbReference>
<feature type="chain" id="PRO_0000090976" description="Elongation factor 1-alpha">
    <location>
        <begin position="1"/>
        <end position="438"/>
    </location>
</feature>
<feature type="domain" description="tr-type G">
    <location>
        <begin position="6"/>
        <end position="229"/>
    </location>
</feature>
<feature type="region of interest" description="G1" evidence="1">
    <location>
        <begin position="15"/>
        <end position="22"/>
    </location>
</feature>
<feature type="region of interest" description="G2" evidence="1">
    <location>
        <begin position="71"/>
        <end position="75"/>
    </location>
</feature>
<feature type="region of interest" description="G3" evidence="1">
    <location>
        <begin position="92"/>
        <end position="95"/>
    </location>
</feature>
<feature type="region of interest" description="G4" evidence="1">
    <location>
        <begin position="154"/>
        <end position="157"/>
    </location>
</feature>
<feature type="region of interest" description="G5" evidence="1">
    <location>
        <begin position="195"/>
        <end position="197"/>
    </location>
</feature>
<feature type="binding site" evidence="2">
    <location>
        <begin position="15"/>
        <end position="22"/>
    </location>
    <ligand>
        <name>GTP</name>
        <dbReference type="ChEBI" id="CHEBI:37565"/>
    </ligand>
</feature>
<feature type="binding site" evidence="2">
    <location>
        <position position="22"/>
    </location>
    <ligand>
        <name>Mg(2+)</name>
        <dbReference type="ChEBI" id="CHEBI:18420"/>
    </ligand>
</feature>
<feature type="binding site" evidence="2">
    <location>
        <begin position="92"/>
        <end position="96"/>
    </location>
    <ligand>
        <name>GTP</name>
        <dbReference type="ChEBI" id="CHEBI:37565"/>
    </ligand>
</feature>
<feature type="binding site" evidence="2">
    <location>
        <begin position="154"/>
        <end position="157"/>
    </location>
    <ligand>
        <name>GTP</name>
        <dbReference type="ChEBI" id="CHEBI:37565"/>
    </ligand>
</feature>
<gene>
    <name evidence="2" type="primary">tuf</name>
    <name type="synonym">tux</name>
</gene>
<evidence type="ECO:0000250" key="1"/>
<evidence type="ECO:0000255" key="2">
    <source>
        <dbReference type="HAMAP-Rule" id="MF_00118"/>
    </source>
</evidence>
<accession>P41203</accession>
<comment type="function">
    <text evidence="2">GTP hydrolase that promotes the GTP-dependent binding of aminoacyl-tRNA to the A-site of ribosomes during protein biosynthesis.</text>
</comment>
<comment type="catalytic activity">
    <reaction evidence="2">
        <text>GTP + H2O = GDP + phosphate + H(+)</text>
        <dbReference type="Rhea" id="RHEA:19669"/>
        <dbReference type="ChEBI" id="CHEBI:15377"/>
        <dbReference type="ChEBI" id="CHEBI:15378"/>
        <dbReference type="ChEBI" id="CHEBI:37565"/>
        <dbReference type="ChEBI" id="CHEBI:43474"/>
        <dbReference type="ChEBI" id="CHEBI:58189"/>
        <dbReference type="EC" id="3.6.5.3"/>
    </reaction>
    <physiologicalReaction direction="left-to-right" evidence="2">
        <dbReference type="Rhea" id="RHEA:19670"/>
    </physiologicalReaction>
</comment>
<comment type="subcellular location">
    <subcellularLocation>
        <location evidence="2">Cytoplasm</location>
    </subcellularLocation>
</comment>
<comment type="similarity">
    <text evidence="2">Belongs to the TRAFAC class translation factor GTPase superfamily. Classic translation factor GTPase family. EF-Tu/EF-1A subfamily.</text>
</comment>
<keyword id="KW-0963">Cytoplasm</keyword>
<keyword id="KW-0251">Elongation factor</keyword>
<keyword id="KW-0342">GTP-binding</keyword>
<keyword id="KW-0378">Hydrolase</keyword>
<keyword id="KW-0460">Magnesium</keyword>
<keyword id="KW-0479">Metal-binding</keyword>
<keyword id="KW-0547">Nucleotide-binding</keyword>
<keyword id="KW-0648">Protein biosynthesis</keyword>
<sequence>MSAPQKPHLNIVIIGHVDHGKSTMTGHILYRLGYFDEKTVKMIEEESKKMGKESFKFAWLLDRMKEERERGVTISLSYMKFETKKYFFTIIDAPGHRDFVKNMITGASQADAAILVVSARKGEFEAGMSAEGQTREHAILARTMGINQLIVAINKMDATEPPYSEKRYNEIKEILGKFLKGLGYDVSKIPFIPISAWTGENLIERSPNMPWYNGPTLVEALDTLEVPPKPINKPLRIPIQDVYNISGIGVVPVGRVETGVLKVGDKLVFMPAGLVAEVKTIETHHTKIEKAEPGDNIGFNVKGVEKKDIKRGDVAGSLDVPPTVADEFTARIMVMWHPTAIAVGYTPVIHVHTASVACRITEIIAKIDPRTGKEIEKNPHFLKQGDIAIVKFKPIKPLVVEKYSDFQGLGRFAMRDMGKTIGIGQVLEIKPAQVNIKK</sequence>
<reference key="1">
    <citation type="journal article" date="1995" name="Mol. Gen. Genet.">
        <title>Chromosomal organization and nucleotide sequence of the genes for elongation factors EF-1 alpha and EF-2 and ribosomal proteins S7 and S10 of the hyperthermophilic archaeum Desulfurococcus mobilis.</title>
        <authorList>
            <person name="Ceccarelli E."/>
            <person name="Bocchetta M."/>
            <person name="Creti R."/>
            <person name="Sanangelantoni A.M."/>
            <person name="Tiboni O."/>
            <person name="Cammarano P."/>
        </authorList>
    </citation>
    <scope>NUCLEOTIDE SEQUENCE [GENOMIC DNA]</scope>
    <source>
        <strain>ATCC 35582 / DSM 2161 / JCM 9186 / Hvv 3/9</strain>
    </source>
</reference>
<organism>
    <name type="scientific">Desulfurococcus mucosus</name>
    <name type="common">Desulfurococcus mobilis</name>
    <dbReference type="NCBI Taxonomy" id="2275"/>
    <lineage>
        <taxon>Archaea</taxon>
        <taxon>Thermoproteota</taxon>
        <taxon>Thermoprotei</taxon>
        <taxon>Desulfurococcales</taxon>
        <taxon>Desulfurococcaceae</taxon>
        <taxon>Desulfurococcus</taxon>
    </lineage>
</organism>
<proteinExistence type="inferred from homology"/>
<name>EF1A_DESMO</name>